<reference key="1">
    <citation type="journal article" date="2006" name="Nat. Cell Biol.">
        <title>CUL4-DDB1 ubiquitin ligase interacts with multiple WD40-repeat proteins and regulates histone methylation.</title>
        <authorList>
            <person name="Higa L.A."/>
            <person name="Wu M."/>
            <person name="Ye T."/>
            <person name="Kobayashi R."/>
            <person name="Sun H."/>
            <person name="Zhang H."/>
        </authorList>
    </citation>
    <scope>NUCLEOTIDE SEQUENCE [MRNA]</scope>
    <scope>FUNCTION</scope>
    <scope>INTERACTION WITH CUL4B AND DDB1</scope>
</reference>
<reference key="2">
    <citation type="journal article" date="2005" name="Science">
        <title>The transcriptional landscape of the mammalian genome.</title>
        <authorList>
            <person name="Carninci P."/>
            <person name="Kasukawa T."/>
            <person name="Katayama S."/>
            <person name="Gough J."/>
            <person name="Frith M.C."/>
            <person name="Maeda N."/>
            <person name="Oyama R."/>
            <person name="Ravasi T."/>
            <person name="Lenhard B."/>
            <person name="Wells C."/>
            <person name="Kodzius R."/>
            <person name="Shimokawa K."/>
            <person name="Bajic V.B."/>
            <person name="Brenner S.E."/>
            <person name="Batalov S."/>
            <person name="Forrest A.R."/>
            <person name="Zavolan M."/>
            <person name="Davis M.J."/>
            <person name="Wilming L.G."/>
            <person name="Aidinis V."/>
            <person name="Allen J.E."/>
            <person name="Ambesi-Impiombato A."/>
            <person name="Apweiler R."/>
            <person name="Aturaliya R.N."/>
            <person name="Bailey T.L."/>
            <person name="Bansal M."/>
            <person name="Baxter L."/>
            <person name="Beisel K.W."/>
            <person name="Bersano T."/>
            <person name="Bono H."/>
            <person name="Chalk A.M."/>
            <person name="Chiu K.P."/>
            <person name="Choudhary V."/>
            <person name="Christoffels A."/>
            <person name="Clutterbuck D.R."/>
            <person name="Crowe M.L."/>
            <person name="Dalla E."/>
            <person name="Dalrymple B.P."/>
            <person name="de Bono B."/>
            <person name="Della Gatta G."/>
            <person name="di Bernardo D."/>
            <person name="Down T."/>
            <person name="Engstrom P."/>
            <person name="Fagiolini M."/>
            <person name="Faulkner G."/>
            <person name="Fletcher C.F."/>
            <person name="Fukushima T."/>
            <person name="Furuno M."/>
            <person name="Futaki S."/>
            <person name="Gariboldi M."/>
            <person name="Georgii-Hemming P."/>
            <person name="Gingeras T.R."/>
            <person name="Gojobori T."/>
            <person name="Green R.E."/>
            <person name="Gustincich S."/>
            <person name="Harbers M."/>
            <person name="Hayashi Y."/>
            <person name="Hensch T.K."/>
            <person name="Hirokawa N."/>
            <person name="Hill D."/>
            <person name="Huminiecki L."/>
            <person name="Iacono M."/>
            <person name="Ikeo K."/>
            <person name="Iwama A."/>
            <person name="Ishikawa T."/>
            <person name="Jakt M."/>
            <person name="Kanapin A."/>
            <person name="Katoh M."/>
            <person name="Kawasawa Y."/>
            <person name="Kelso J."/>
            <person name="Kitamura H."/>
            <person name="Kitano H."/>
            <person name="Kollias G."/>
            <person name="Krishnan S.P."/>
            <person name="Kruger A."/>
            <person name="Kummerfeld S.K."/>
            <person name="Kurochkin I.V."/>
            <person name="Lareau L.F."/>
            <person name="Lazarevic D."/>
            <person name="Lipovich L."/>
            <person name="Liu J."/>
            <person name="Liuni S."/>
            <person name="McWilliam S."/>
            <person name="Madan Babu M."/>
            <person name="Madera M."/>
            <person name="Marchionni L."/>
            <person name="Matsuda H."/>
            <person name="Matsuzawa S."/>
            <person name="Miki H."/>
            <person name="Mignone F."/>
            <person name="Miyake S."/>
            <person name="Morris K."/>
            <person name="Mottagui-Tabar S."/>
            <person name="Mulder N."/>
            <person name="Nakano N."/>
            <person name="Nakauchi H."/>
            <person name="Ng P."/>
            <person name="Nilsson R."/>
            <person name="Nishiguchi S."/>
            <person name="Nishikawa S."/>
            <person name="Nori F."/>
            <person name="Ohara O."/>
            <person name="Okazaki Y."/>
            <person name="Orlando V."/>
            <person name="Pang K.C."/>
            <person name="Pavan W.J."/>
            <person name="Pavesi G."/>
            <person name="Pesole G."/>
            <person name="Petrovsky N."/>
            <person name="Piazza S."/>
            <person name="Reed J."/>
            <person name="Reid J.F."/>
            <person name="Ring B.Z."/>
            <person name="Ringwald M."/>
            <person name="Rost B."/>
            <person name="Ruan Y."/>
            <person name="Salzberg S.L."/>
            <person name="Sandelin A."/>
            <person name="Schneider C."/>
            <person name="Schoenbach C."/>
            <person name="Sekiguchi K."/>
            <person name="Semple C.A."/>
            <person name="Seno S."/>
            <person name="Sessa L."/>
            <person name="Sheng Y."/>
            <person name="Shibata Y."/>
            <person name="Shimada H."/>
            <person name="Shimada K."/>
            <person name="Silva D."/>
            <person name="Sinclair B."/>
            <person name="Sperling S."/>
            <person name="Stupka E."/>
            <person name="Sugiura K."/>
            <person name="Sultana R."/>
            <person name="Takenaka Y."/>
            <person name="Taki K."/>
            <person name="Tammoja K."/>
            <person name="Tan S.L."/>
            <person name="Tang S."/>
            <person name="Taylor M.S."/>
            <person name="Tegner J."/>
            <person name="Teichmann S.A."/>
            <person name="Ueda H.R."/>
            <person name="van Nimwegen E."/>
            <person name="Verardo R."/>
            <person name="Wei C.L."/>
            <person name="Yagi K."/>
            <person name="Yamanishi H."/>
            <person name="Zabarovsky E."/>
            <person name="Zhu S."/>
            <person name="Zimmer A."/>
            <person name="Hide W."/>
            <person name="Bult C."/>
            <person name="Grimmond S.M."/>
            <person name="Teasdale R.D."/>
            <person name="Liu E.T."/>
            <person name="Brusic V."/>
            <person name="Quackenbush J."/>
            <person name="Wahlestedt C."/>
            <person name="Mattick J.S."/>
            <person name="Hume D.A."/>
            <person name="Kai C."/>
            <person name="Sasaki D."/>
            <person name="Tomaru Y."/>
            <person name="Fukuda S."/>
            <person name="Kanamori-Katayama M."/>
            <person name="Suzuki M."/>
            <person name="Aoki J."/>
            <person name="Arakawa T."/>
            <person name="Iida J."/>
            <person name="Imamura K."/>
            <person name="Itoh M."/>
            <person name="Kato T."/>
            <person name="Kawaji H."/>
            <person name="Kawagashira N."/>
            <person name="Kawashima T."/>
            <person name="Kojima M."/>
            <person name="Kondo S."/>
            <person name="Konno H."/>
            <person name="Nakano K."/>
            <person name="Ninomiya N."/>
            <person name="Nishio T."/>
            <person name="Okada M."/>
            <person name="Plessy C."/>
            <person name="Shibata K."/>
            <person name="Shiraki T."/>
            <person name="Suzuki S."/>
            <person name="Tagami M."/>
            <person name="Waki K."/>
            <person name="Watahiki A."/>
            <person name="Okamura-Oho Y."/>
            <person name="Suzuki H."/>
            <person name="Kawai J."/>
            <person name="Hayashizaki Y."/>
        </authorList>
    </citation>
    <scope>NUCLEOTIDE SEQUENCE [LARGE SCALE MRNA]</scope>
    <source>
        <strain>C57BL/6J</strain>
        <tissue>Liver</tissue>
        <tissue>Ovary</tissue>
        <tissue>Tongue</tissue>
    </source>
</reference>
<reference key="3">
    <citation type="journal article" date="2004" name="Genome Res.">
        <title>The status, quality, and expansion of the NIH full-length cDNA project: the Mammalian Gene Collection (MGC).</title>
        <authorList>
            <consortium name="The MGC Project Team"/>
        </authorList>
    </citation>
    <scope>NUCLEOTIDE SEQUENCE [LARGE SCALE MRNA]</scope>
    <source>
        <strain>C57BL/6J</strain>
        <tissue>Mammary gland</tissue>
    </source>
</reference>
<gene>
    <name type="primary">Wdr5b</name>
</gene>
<comment type="function">
    <text evidence="2">May function as a substrate receptor for CUL4-DDB1 ubiquitin E3 ligase complex.</text>
</comment>
<comment type="subunit">
    <text evidence="2">Probable part of a cullin-RING E3 protein ligase complex containing CUL4B-DDB1 and a substrate-recruiting component (DCAF). Interacts with CUL4B and DDB1.</text>
</comment>
<comment type="similarity">
    <text evidence="3">Belongs to the WD repeat WDR5/wds family.</text>
</comment>
<organism>
    <name type="scientific">Mus musculus</name>
    <name type="common">Mouse</name>
    <dbReference type="NCBI Taxonomy" id="10090"/>
    <lineage>
        <taxon>Eukaryota</taxon>
        <taxon>Metazoa</taxon>
        <taxon>Chordata</taxon>
        <taxon>Craniata</taxon>
        <taxon>Vertebrata</taxon>
        <taxon>Euteleostomi</taxon>
        <taxon>Mammalia</taxon>
        <taxon>Eutheria</taxon>
        <taxon>Euarchontoglires</taxon>
        <taxon>Glires</taxon>
        <taxon>Rodentia</taxon>
        <taxon>Myomorpha</taxon>
        <taxon>Muroidea</taxon>
        <taxon>Muridae</taxon>
        <taxon>Murinae</taxon>
        <taxon>Mus</taxon>
        <taxon>Mus</taxon>
    </lineage>
</organism>
<keyword id="KW-1185">Reference proteome</keyword>
<keyword id="KW-0677">Repeat</keyword>
<keyword id="KW-0833">Ubl conjugation pathway</keyword>
<keyword id="KW-0853">WD repeat</keyword>
<protein>
    <recommendedName>
        <fullName>WD repeat-containing protein 5B</fullName>
    </recommendedName>
</protein>
<proteinExistence type="evidence at protein level"/>
<dbReference type="EMBL" id="EF011616">
    <property type="protein sequence ID" value="ABK41106.1"/>
    <property type="molecule type" value="mRNA"/>
</dbReference>
<dbReference type="EMBL" id="AK009247">
    <property type="protein sequence ID" value="BAB26165.1"/>
    <property type="molecule type" value="mRNA"/>
</dbReference>
<dbReference type="EMBL" id="AK149554">
    <property type="protein sequence ID" value="BAE28955.1"/>
    <property type="molecule type" value="mRNA"/>
</dbReference>
<dbReference type="EMBL" id="AK165100">
    <property type="protein sequence ID" value="BAE38035.1"/>
    <property type="molecule type" value="mRNA"/>
</dbReference>
<dbReference type="EMBL" id="BC064045">
    <property type="protein sequence ID" value="AAH64045.1"/>
    <property type="molecule type" value="mRNA"/>
</dbReference>
<dbReference type="CCDS" id="CCDS28145.1"/>
<dbReference type="RefSeq" id="NP_081389.1">
    <property type="nucleotide sequence ID" value="NM_027113.2"/>
</dbReference>
<dbReference type="SMR" id="Q9D7H2"/>
<dbReference type="FunCoup" id="Q9D7H2">
    <property type="interactions" value="211"/>
</dbReference>
<dbReference type="STRING" id="10090.ENSMUSP00000040852"/>
<dbReference type="PhosphoSitePlus" id="Q9D7H2"/>
<dbReference type="jPOST" id="Q9D7H2"/>
<dbReference type="PaxDb" id="10090-ENSMUSP00000040852"/>
<dbReference type="ProteomicsDB" id="299668"/>
<dbReference type="Antibodypedia" id="51262">
    <property type="antibodies" value="74 antibodies from 17 providers"/>
</dbReference>
<dbReference type="Ensembl" id="ENSMUST00000042203.10">
    <property type="protein sequence ID" value="ENSMUSP00000040852.9"/>
    <property type="gene ID" value="ENSMUSG00000034379.10"/>
</dbReference>
<dbReference type="GeneID" id="69544"/>
<dbReference type="KEGG" id="mmu:69544"/>
<dbReference type="UCSC" id="uc007zcc.1">
    <property type="organism name" value="mouse"/>
</dbReference>
<dbReference type="AGR" id="MGI:1916794"/>
<dbReference type="CTD" id="54554"/>
<dbReference type="MGI" id="MGI:1916794">
    <property type="gene designation" value="Wdr5b"/>
</dbReference>
<dbReference type="VEuPathDB" id="HostDB:ENSMUSG00000034379"/>
<dbReference type="eggNOG" id="KOG0266">
    <property type="taxonomic scope" value="Eukaryota"/>
</dbReference>
<dbReference type="GeneTree" id="ENSGT00940000154143"/>
<dbReference type="HOGENOM" id="CLU_000288_57_1_1"/>
<dbReference type="InParanoid" id="Q9D7H2"/>
<dbReference type="OMA" id="NYALKCT"/>
<dbReference type="OrthoDB" id="674604at2759"/>
<dbReference type="PhylomeDB" id="Q9D7H2"/>
<dbReference type="TreeFam" id="TF314125"/>
<dbReference type="BioGRID-ORCS" id="69544">
    <property type="hits" value="4 hits in 78 CRISPR screens"/>
</dbReference>
<dbReference type="ChiTaRS" id="Wdr5b">
    <property type="organism name" value="mouse"/>
</dbReference>
<dbReference type="PRO" id="PR:Q9D7H2"/>
<dbReference type="Proteomes" id="UP000000589">
    <property type="component" value="Chromosome 16"/>
</dbReference>
<dbReference type="RNAct" id="Q9D7H2">
    <property type="molecule type" value="protein"/>
</dbReference>
<dbReference type="Bgee" id="ENSMUSG00000034379">
    <property type="expression patterns" value="Expressed in retinal neural layer and 151 other cell types or tissues"/>
</dbReference>
<dbReference type="CDD" id="cd00200">
    <property type="entry name" value="WD40"/>
    <property type="match status" value="1"/>
</dbReference>
<dbReference type="FunFam" id="2.130.10.10:FF:000029">
    <property type="entry name" value="WD repeat-containing protein 5"/>
    <property type="match status" value="1"/>
</dbReference>
<dbReference type="Gene3D" id="2.130.10.10">
    <property type="entry name" value="YVTN repeat-like/Quinoprotein amine dehydrogenase"/>
    <property type="match status" value="1"/>
</dbReference>
<dbReference type="InterPro" id="IPR020472">
    <property type="entry name" value="G-protein_beta_WD-40_rep"/>
</dbReference>
<dbReference type="InterPro" id="IPR015943">
    <property type="entry name" value="WD40/YVTN_repeat-like_dom_sf"/>
</dbReference>
<dbReference type="InterPro" id="IPR019775">
    <property type="entry name" value="WD40_repeat_CS"/>
</dbReference>
<dbReference type="InterPro" id="IPR036322">
    <property type="entry name" value="WD40_repeat_dom_sf"/>
</dbReference>
<dbReference type="InterPro" id="IPR001680">
    <property type="entry name" value="WD40_rpt"/>
</dbReference>
<dbReference type="PANTHER" id="PTHR22847:SF516">
    <property type="entry name" value="WD REPEAT-CONTAINING PROTEIN 5B"/>
    <property type="match status" value="1"/>
</dbReference>
<dbReference type="PANTHER" id="PTHR22847">
    <property type="entry name" value="WD40 REPEAT PROTEIN"/>
    <property type="match status" value="1"/>
</dbReference>
<dbReference type="Pfam" id="PF25175">
    <property type="entry name" value="Beta-prop_WDR5"/>
    <property type="match status" value="1"/>
</dbReference>
<dbReference type="PIRSF" id="PIRSF002394">
    <property type="entry name" value="GN-bd_beta"/>
    <property type="match status" value="1"/>
</dbReference>
<dbReference type="PRINTS" id="PR00320">
    <property type="entry name" value="GPROTEINBRPT"/>
</dbReference>
<dbReference type="SMART" id="SM00320">
    <property type="entry name" value="WD40"/>
    <property type="match status" value="7"/>
</dbReference>
<dbReference type="SUPFAM" id="SSF50978">
    <property type="entry name" value="WD40 repeat-like"/>
    <property type="match status" value="1"/>
</dbReference>
<dbReference type="PROSITE" id="PS00678">
    <property type="entry name" value="WD_REPEATS_1"/>
    <property type="match status" value="4"/>
</dbReference>
<dbReference type="PROSITE" id="PS50082">
    <property type="entry name" value="WD_REPEATS_2"/>
    <property type="match status" value="6"/>
</dbReference>
<dbReference type="PROSITE" id="PS50294">
    <property type="entry name" value="WD_REPEATS_REGION"/>
    <property type="match status" value="1"/>
</dbReference>
<name>WDR5B_MOUSE</name>
<accession>Q9D7H2</accession>
<evidence type="ECO:0000256" key="1">
    <source>
        <dbReference type="SAM" id="MobiDB-lite"/>
    </source>
</evidence>
<evidence type="ECO:0000269" key="2">
    <source>
    </source>
</evidence>
<evidence type="ECO:0000305" key="3"/>
<sequence>MATEHLPAERAQSLLSAPRREEEPQKPNYALRLTLAGHSAAISSVKFSPNGEWLASSAADALIIIWGAYDGNCKKTLYGHSLEISDVAWSSDSSRLVSASDDKTLKVWDMRSGKCLKTLKGHSDFVFCCDFNPPSNLIVSGSFDESVKIWEVKTGKCLKTLSAHSDPISAVNFNCNGSLIVSGSYDGLCRIWDAASGQCLRTLADEGNPPVSFVKFSPNGKYILTATLDNTLKLWDYSRGRCLKTYTGHKNEKYCLFASFSVTGRKWVVSGSEDNMVYIWNLQTKEIVQRLQGHTDVVISAACHPTKNIIASAALENDKTIKVWSSDC</sequence>
<feature type="chain" id="PRO_0000278462" description="WD repeat-containing protein 5B">
    <location>
        <begin position="1"/>
        <end position="328"/>
    </location>
</feature>
<feature type="repeat" description="WD 1">
    <location>
        <begin position="37"/>
        <end position="76"/>
    </location>
</feature>
<feature type="repeat" description="WD 2">
    <location>
        <begin position="79"/>
        <end position="120"/>
    </location>
</feature>
<feature type="repeat" description="WD 3">
    <location>
        <begin position="122"/>
        <end position="162"/>
    </location>
</feature>
<feature type="repeat" description="WD 4">
    <location>
        <begin position="163"/>
        <end position="202"/>
    </location>
</feature>
<feature type="repeat" description="WD 5">
    <location>
        <begin position="206"/>
        <end position="247"/>
    </location>
</feature>
<feature type="repeat" description="WD 6">
    <location>
        <begin position="250"/>
        <end position="290"/>
    </location>
</feature>
<feature type="repeat" description="WD 7">
    <location>
        <begin position="293"/>
        <end position="328"/>
    </location>
</feature>
<feature type="region of interest" description="Disordered" evidence="1">
    <location>
        <begin position="1"/>
        <end position="25"/>
    </location>
</feature>
<feature type="short sequence motif" description="DDB1-binding motif">
    <location>
        <begin position="186"/>
        <end position="190"/>
    </location>
</feature>